<evidence type="ECO:0000255" key="1">
    <source>
        <dbReference type="HAMAP-Rule" id="MF_00142"/>
    </source>
</evidence>
<evidence type="ECO:0000305" key="2"/>
<protein>
    <recommendedName>
        <fullName evidence="1">Iron-sulfur cluster assembly protein CyaY</fullName>
    </recommendedName>
</protein>
<sequence>MNQYSEFHQLADQLMLYIEETLDGFSGDSDIDYETNGGVMTLTFENGSKIVINRQEPLHQVWPATKAGGYHFNYREGKWFCSRSGEEFFAKLSQAATTQAGEEVSFG</sequence>
<proteinExistence type="inferred from homology"/>
<organism>
    <name type="scientific">Yersinia intermedia</name>
    <dbReference type="NCBI Taxonomy" id="631"/>
    <lineage>
        <taxon>Bacteria</taxon>
        <taxon>Pseudomonadati</taxon>
        <taxon>Pseudomonadota</taxon>
        <taxon>Gammaproteobacteria</taxon>
        <taxon>Enterobacterales</taxon>
        <taxon>Yersiniaceae</taxon>
        <taxon>Yersinia</taxon>
    </lineage>
</organism>
<accession>P30534</accession>
<reference key="1">
    <citation type="journal article" date="1996" name="Biochimie">
        <title>Comparative analysis of the cya locus in enterobacteria and related Gram-negative facultative anaerobes.</title>
        <authorList>
            <person name="Trotot P."/>
            <person name="Sismeiro O."/>
            <person name="Vivares C."/>
            <person name="Glaser P."/>
            <person name="Bresson-Roy A."/>
            <person name="Danchin A."/>
        </authorList>
    </citation>
    <scope>NUCLEOTIDE SEQUENCE [GENOMIC DNA]</scope>
</reference>
<feature type="chain" id="PRO_0000193969" description="Iron-sulfur cluster assembly protein CyaY">
    <location>
        <begin position="1"/>
        <end position="107"/>
    </location>
</feature>
<keyword id="KW-0408">Iron</keyword>
<keyword id="KW-0479">Metal-binding</keyword>
<dbReference type="EMBL" id="X66781">
    <property type="protein sequence ID" value="CAA47278.1"/>
    <property type="molecule type" value="Genomic_DNA"/>
</dbReference>
<dbReference type="PIR" id="S24982">
    <property type="entry name" value="S24982"/>
</dbReference>
<dbReference type="SMR" id="P30534"/>
<dbReference type="STRING" id="631.CH53_1994"/>
<dbReference type="eggNOG" id="COG1965">
    <property type="taxonomic scope" value="Bacteria"/>
</dbReference>
<dbReference type="GO" id="GO:0005829">
    <property type="term" value="C:cytosol"/>
    <property type="evidence" value="ECO:0007669"/>
    <property type="project" value="TreeGrafter"/>
</dbReference>
<dbReference type="GO" id="GO:0008199">
    <property type="term" value="F:ferric iron binding"/>
    <property type="evidence" value="ECO:0007669"/>
    <property type="project" value="InterPro"/>
</dbReference>
<dbReference type="GO" id="GO:0008198">
    <property type="term" value="F:ferrous iron binding"/>
    <property type="evidence" value="ECO:0007669"/>
    <property type="project" value="TreeGrafter"/>
</dbReference>
<dbReference type="GO" id="GO:0016226">
    <property type="term" value="P:iron-sulfur cluster assembly"/>
    <property type="evidence" value="ECO:0007669"/>
    <property type="project" value="UniProtKB-UniRule"/>
</dbReference>
<dbReference type="CDD" id="cd00503">
    <property type="entry name" value="Frataxin"/>
    <property type="match status" value="1"/>
</dbReference>
<dbReference type="Gene3D" id="3.30.920.10">
    <property type="entry name" value="Frataxin/CyaY"/>
    <property type="match status" value="1"/>
</dbReference>
<dbReference type="HAMAP" id="MF_00142">
    <property type="entry name" value="CyaY"/>
    <property type="match status" value="1"/>
</dbReference>
<dbReference type="InterPro" id="IPR047584">
    <property type="entry name" value="CyaY"/>
</dbReference>
<dbReference type="InterPro" id="IPR002908">
    <property type="entry name" value="Frataxin/CyaY"/>
</dbReference>
<dbReference type="InterPro" id="IPR036524">
    <property type="entry name" value="Frataxin/CyaY_sf"/>
</dbReference>
<dbReference type="InterPro" id="IPR020895">
    <property type="entry name" value="Frataxin_CS"/>
</dbReference>
<dbReference type="NCBIfam" id="TIGR03421">
    <property type="entry name" value="FeS_CyaY"/>
    <property type="match status" value="1"/>
</dbReference>
<dbReference type="PANTHER" id="PTHR16821">
    <property type="entry name" value="FRATAXIN"/>
    <property type="match status" value="1"/>
</dbReference>
<dbReference type="PANTHER" id="PTHR16821:SF2">
    <property type="entry name" value="FRATAXIN, MITOCHONDRIAL"/>
    <property type="match status" value="1"/>
</dbReference>
<dbReference type="Pfam" id="PF01491">
    <property type="entry name" value="Frataxin_Cyay"/>
    <property type="match status" value="1"/>
</dbReference>
<dbReference type="SMART" id="SM01219">
    <property type="entry name" value="Frataxin_Cyay"/>
    <property type="match status" value="1"/>
</dbReference>
<dbReference type="SUPFAM" id="SSF55387">
    <property type="entry name" value="Frataxin/Nqo15-like"/>
    <property type="match status" value="1"/>
</dbReference>
<dbReference type="PROSITE" id="PS01344">
    <property type="entry name" value="FRATAXIN_1"/>
    <property type="match status" value="1"/>
</dbReference>
<dbReference type="PROSITE" id="PS50810">
    <property type="entry name" value="FRATAXIN_2"/>
    <property type="match status" value="1"/>
</dbReference>
<gene>
    <name evidence="1" type="primary">cyaY</name>
</gene>
<name>CYAY_YERIN</name>
<comment type="function">
    <text evidence="1">Involved in iron-sulfur (Fe-S) cluster assembly. May act as a regulator of Fe-S biogenesis.</text>
</comment>
<comment type="similarity">
    <text evidence="1 2">Belongs to the frataxin family.</text>
</comment>